<keyword id="KW-0002">3D-structure</keyword>
<keyword id="KW-0496">Mitochondrion</keyword>
<keyword id="KW-1185">Reference proteome</keyword>
<keyword id="KW-0687">Ribonucleoprotein</keyword>
<keyword id="KW-0689">Ribosomal protein</keyword>
<keyword id="KW-0809">Transit peptide</keyword>
<dbReference type="EMBL" id="AK009082">
    <property type="protein sequence ID" value="BAB26060.2"/>
    <property type="molecule type" value="mRNA"/>
</dbReference>
<dbReference type="EMBL" id="BC051936">
    <property type="protein sequence ID" value="AAH51936.1"/>
    <property type="molecule type" value="mRNA"/>
</dbReference>
<dbReference type="EMBL" id="BC069980">
    <property type="protein sequence ID" value="AAH69980.1"/>
    <property type="molecule type" value="mRNA"/>
</dbReference>
<dbReference type="EMBL" id="BC116437">
    <property type="protein sequence ID" value="AAI16438.1"/>
    <property type="molecule type" value="mRNA"/>
</dbReference>
<dbReference type="CCDS" id="CCDS14918.1"/>
<dbReference type="RefSeq" id="NP_076003.3">
    <property type="nucleotide sequence ID" value="NM_023514.4"/>
</dbReference>
<dbReference type="PDB" id="7PNT">
    <property type="method" value="EM"/>
    <property type="resolution" value="3.19 A"/>
    <property type="chains" value="G=1-390"/>
</dbReference>
<dbReference type="PDB" id="7PNU">
    <property type="method" value="EM"/>
    <property type="resolution" value="3.06 A"/>
    <property type="chains" value="G=1-390"/>
</dbReference>
<dbReference type="PDB" id="7PNV">
    <property type="method" value="EM"/>
    <property type="resolution" value="3.06 A"/>
    <property type="chains" value="G=1-390"/>
</dbReference>
<dbReference type="PDB" id="7PNW">
    <property type="method" value="EM"/>
    <property type="resolution" value="3.09 A"/>
    <property type="chains" value="G=1-390"/>
</dbReference>
<dbReference type="PDBsum" id="7PNT"/>
<dbReference type="PDBsum" id="7PNU"/>
<dbReference type="PDBsum" id="7PNV"/>
<dbReference type="PDBsum" id="7PNW"/>
<dbReference type="EMDB" id="EMD-13551"/>
<dbReference type="EMDB" id="EMD-13552"/>
<dbReference type="EMDB" id="EMD-13553"/>
<dbReference type="EMDB" id="EMD-13554"/>
<dbReference type="SMR" id="Q9D7N3"/>
<dbReference type="BioGRID" id="213503">
    <property type="interactions" value="9"/>
</dbReference>
<dbReference type="ComplexPortal" id="CPX-5301">
    <property type="entry name" value="28S mitochondrial small ribosomal subunit"/>
</dbReference>
<dbReference type="FunCoup" id="Q9D7N3">
    <property type="interactions" value="1786"/>
</dbReference>
<dbReference type="STRING" id="10090.ENSMUSP00000056855"/>
<dbReference type="iPTMnet" id="Q9D7N3"/>
<dbReference type="PhosphoSitePlus" id="Q9D7N3"/>
<dbReference type="jPOST" id="Q9D7N3"/>
<dbReference type="PaxDb" id="10090-ENSMUSP00000056855"/>
<dbReference type="PeptideAtlas" id="Q9D7N3"/>
<dbReference type="ProteomicsDB" id="256796"/>
<dbReference type="Pumba" id="Q9D7N3"/>
<dbReference type="Antibodypedia" id="32981">
    <property type="antibodies" value="182 antibodies from 28 providers"/>
</dbReference>
<dbReference type="DNASU" id="69527"/>
<dbReference type="Ensembl" id="ENSMUST00000057208.13">
    <property type="protein sequence ID" value="ENSMUSP00000056855.9"/>
    <property type="gene ID" value="ENSMUSG00000060679.15"/>
</dbReference>
<dbReference type="GeneID" id="69527"/>
<dbReference type="KEGG" id="mmu:69527"/>
<dbReference type="UCSC" id="uc007ava.2">
    <property type="organism name" value="mouse"/>
</dbReference>
<dbReference type="AGR" id="MGI:1916777"/>
<dbReference type="CTD" id="64965"/>
<dbReference type="MGI" id="MGI:1916777">
    <property type="gene designation" value="Mrps9"/>
</dbReference>
<dbReference type="VEuPathDB" id="HostDB:ENSMUSG00000060679"/>
<dbReference type="eggNOG" id="KOG1697">
    <property type="taxonomic scope" value="Eukaryota"/>
</dbReference>
<dbReference type="GeneTree" id="ENSGT00390000011204"/>
<dbReference type="HOGENOM" id="CLU_060546_1_0_1"/>
<dbReference type="InParanoid" id="Q9D7N3"/>
<dbReference type="OMA" id="HHFLFYT"/>
<dbReference type="OrthoDB" id="10254627at2759"/>
<dbReference type="PhylomeDB" id="Q9D7N3"/>
<dbReference type="TreeFam" id="TF106154"/>
<dbReference type="Reactome" id="R-MMU-5389840">
    <property type="pathway name" value="Mitochondrial translation elongation"/>
</dbReference>
<dbReference type="Reactome" id="R-MMU-5419276">
    <property type="pathway name" value="Mitochondrial translation termination"/>
</dbReference>
<dbReference type="BioGRID-ORCS" id="69527">
    <property type="hits" value="18 hits in 77 CRISPR screens"/>
</dbReference>
<dbReference type="ChiTaRS" id="Mrps9">
    <property type="organism name" value="mouse"/>
</dbReference>
<dbReference type="PRO" id="PR:Q9D7N3"/>
<dbReference type="Proteomes" id="UP000000589">
    <property type="component" value="Chromosome 1"/>
</dbReference>
<dbReference type="RNAct" id="Q9D7N3">
    <property type="molecule type" value="protein"/>
</dbReference>
<dbReference type="Bgee" id="ENSMUSG00000060679">
    <property type="expression patterns" value="Expressed in paneth cell and 254 other cell types or tissues"/>
</dbReference>
<dbReference type="ExpressionAtlas" id="Q9D7N3">
    <property type="expression patterns" value="baseline and differential"/>
</dbReference>
<dbReference type="GO" id="GO:0005743">
    <property type="term" value="C:mitochondrial inner membrane"/>
    <property type="evidence" value="ECO:0000303"/>
    <property type="project" value="ComplexPortal"/>
</dbReference>
<dbReference type="GO" id="GO:0005763">
    <property type="term" value="C:mitochondrial small ribosomal subunit"/>
    <property type="evidence" value="ECO:0000250"/>
    <property type="project" value="UniProtKB"/>
</dbReference>
<dbReference type="GO" id="GO:0005739">
    <property type="term" value="C:mitochondrion"/>
    <property type="evidence" value="ECO:0007005"/>
    <property type="project" value="MGI"/>
</dbReference>
<dbReference type="GO" id="GO:0005730">
    <property type="term" value="C:nucleolus"/>
    <property type="evidence" value="ECO:0007669"/>
    <property type="project" value="Ensembl"/>
</dbReference>
<dbReference type="GO" id="GO:0003735">
    <property type="term" value="F:structural constituent of ribosome"/>
    <property type="evidence" value="ECO:0007669"/>
    <property type="project" value="InterPro"/>
</dbReference>
<dbReference type="GO" id="GO:0032543">
    <property type="term" value="P:mitochondrial translation"/>
    <property type="evidence" value="ECO:0000303"/>
    <property type="project" value="ComplexPortal"/>
</dbReference>
<dbReference type="FunFam" id="3.30.230.10:FF:000035">
    <property type="entry name" value="28S ribosomal protein S9, mitochondrial"/>
    <property type="match status" value="1"/>
</dbReference>
<dbReference type="Gene3D" id="3.30.230.10">
    <property type="match status" value="1"/>
</dbReference>
<dbReference type="InterPro" id="IPR020568">
    <property type="entry name" value="Ribosomal_Su5_D2-typ_SF"/>
</dbReference>
<dbReference type="InterPro" id="IPR000754">
    <property type="entry name" value="Ribosomal_uS9"/>
</dbReference>
<dbReference type="InterPro" id="IPR023035">
    <property type="entry name" value="Ribosomal_uS9_bac/plastid"/>
</dbReference>
<dbReference type="InterPro" id="IPR020574">
    <property type="entry name" value="Ribosomal_uS9_CS"/>
</dbReference>
<dbReference type="InterPro" id="IPR014721">
    <property type="entry name" value="Ribsml_uS5_D2-typ_fold_subgr"/>
</dbReference>
<dbReference type="NCBIfam" id="NF001099">
    <property type="entry name" value="PRK00132.1"/>
    <property type="match status" value="1"/>
</dbReference>
<dbReference type="PANTHER" id="PTHR21569">
    <property type="entry name" value="RIBOSOMAL PROTEIN S9"/>
    <property type="match status" value="1"/>
</dbReference>
<dbReference type="PANTHER" id="PTHR21569:SF1">
    <property type="entry name" value="SMALL RIBOSOMAL SUBUNIT PROTEIN US9M"/>
    <property type="match status" value="1"/>
</dbReference>
<dbReference type="Pfam" id="PF00380">
    <property type="entry name" value="Ribosomal_S9"/>
    <property type="match status" value="1"/>
</dbReference>
<dbReference type="SUPFAM" id="SSF54211">
    <property type="entry name" value="Ribosomal protein S5 domain 2-like"/>
    <property type="match status" value="1"/>
</dbReference>
<dbReference type="PROSITE" id="PS00360">
    <property type="entry name" value="RIBOSOMAL_S9"/>
    <property type="match status" value="1"/>
</dbReference>
<reference key="1">
    <citation type="journal article" date="2005" name="Science">
        <title>The transcriptional landscape of the mammalian genome.</title>
        <authorList>
            <person name="Carninci P."/>
            <person name="Kasukawa T."/>
            <person name="Katayama S."/>
            <person name="Gough J."/>
            <person name="Frith M.C."/>
            <person name="Maeda N."/>
            <person name="Oyama R."/>
            <person name="Ravasi T."/>
            <person name="Lenhard B."/>
            <person name="Wells C."/>
            <person name="Kodzius R."/>
            <person name="Shimokawa K."/>
            <person name="Bajic V.B."/>
            <person name="Brenner S.E."/>
            <person name="Batalov S."/>
            <person name="Forrest A.R."/>
            <person name="Zavolan M."/>
            <person name="Davis M.J."/>
            <person name="Wilming L.G."/>
            <person name="Aidinis V."/>
            <person name="Allen J.E."/>
            <person name="Ambesi-Impiombato A."/>
            <person name="Apweiler R."/>
            <person name="Aturaliya R.N."/>
            <person name="Bailey T.L."/>
            <person name="Bansal M."/>
            <person name="Baxter L."/>
            <person name="Beisel K.W."/>
            <person name="Bersano T."/>
            <person name="Bono H."/>
            <person name="Chalk A.M."/>
            <person name="Chiu K.P."/>
            <person name="Choudhary V."/>
            <person name="Christoffels A."/>
            <person name="Clutterbuck D.R."/>
            <person name="Crowe M.L."/>
            <person name="Dalla E."/>
            <person name="Dalrymple B.P."/>
            <person name="de Bono B."/>
            <person name="Della Gatta G."/>
            <person name="di Bernardo D."/>
            <person name="Down T."/>
            <person name="Engstrom P."/>
            <person name="Fagiolini M."/>
            <person name="Faulkner G."/>
            <person name="Fletcher C.F."/>
            <person name="Fukushima T."/>
            <person name="Furuno M."/>
            <person name="Futaki S."/>
            <person name="Gariboldi M."/>
            <person name="Georgii-Hemming P."/>
            <person name="Gingeras T.R."/>
            <person name="Gojobori T."/>
            <person name="Green R.E."/>
            <person name="Gustincich S."/>
            <person name="Harbers M."/>
            <person name="Hayashi Y."/>
            <person name="Hensch T.K."/>
            <person name="Hirokawa N."/>
            <person name="Hill D."/>
            <person name="Huminiecki L."/>
            <person name="Iacono M."/>
            <person name="Ikeo K."/>
            <person name="Iwama A."/>
            <person name="Ishikawa T."/>
            <person name="Jakt M."/>
            <person name="Kanapin A."/>
            <person name="Katoh M."/>
            <person name="Kawasawa Y."/>
            <person name="Kelso J."/>
            <person name="Kitamura H."/>
            <person name="Kitano H."/>
            <person name="Kollias G."/>
            <person name="Krishnan S.P."/>
            <person name="Kruger A."/>
            <person name="Kummerfeld S.K."/>
            <person name="Kurochkin I.V."/>
            <person name="Lareau L.F."/>
            <person name="Lazarevic D."/>
            <person name="Lipovich L."/>
            <person name="Liu J."/>
            <person name="Liuni S."/>
            <person name="McWilliam S."/>
            <person name="Madan Babu M."/>
            <person name="Madera M."/>
            <person name="Marchionni L."/>
            <person name="Matsuda H."/>
            <person name="Matsuzawa S."/>
            <person name="Miki H."/>
            <person name="Mignone F."/>
            <person name="Miyake S."/>
            <person name="Morris K."/>
            <person name="Mottagui-Tabar S."/>
            <person name="Mulder N."/>
            <person name="Nakano N."/>
            <person name="Nakauchi H."/>
            <person name="Ng P."/>
            <person name="Nilsson R."/>
            <person name="Nishiguchi S."/>
            <person name="Nishikawa S."/>
            <person name="Nori F."/>
            <person name="Ohara O."/>
            <person name="Okazaki Y."/>
            <person name="Orlando V."/>
            <person name="Pang K.C."/>
            <person name="Pavan W.J."/>
            <person name="Pavesi G."/>
            <person name="Pesole G."/>
            <person name="Petrovsky N."/>
            <person name="Piazza S."/>
            <person name="Reed J."/>
            <person name="Reid J.F."/>
            <person name="Ring B.Z."/>
            <person name="Ringwald M."/>
            <person name="Rost B."/>
            <person name="Ruan Y."/>
            <person name="Salzberg S.L."/>
            <person name="Sandelin A."/>
            <person name="Schneider C."/>
            <person name="Schoenbach C."/>
            <person name="Sekiguchi K."/>
            <person name="Semple C.A."/>
            <person name="Seno S."/>
            <person name="Sessa L."/>
            <person name="Sheng Y."/>
            <person name="Shibata Y."/>
            <person name="Shimada H."/>
            <person name="Shimada K."/>
            <person name="Silva D."/>
            <person name="Sinclair B."/>
            <person name="Sperling S."/>
            <person name="Stupka E."/>
            <person name="Sugiura K."/>
            <person name="Sultana R."/>
            <person name="Takenaka Y."/>
            <person name="Taki K."/>
            <person name="Tammoja K."/>
            <person name="Tan S.L."/>
            <person name="Tang S."/>
            <person name="Taylor M.S."/>
            <person name="Tegner J."/>
            <person name="Teichmann S.A."/>
            <person name="Ueda H.R."/>
            <person name="van Nimwegen E."/>
            <person name="Verardo R."/>
            <person name="Wei C.L."/>
            <person name="Yagi K."/>
            <person name="Yamanishi H."/>
            <person name="Zabarovsky E."/>
            <person name="Zhu S."/>
            <person name="Zimmer A."/>
            <person name="Hide W."/>
            <person name="Bult C."/>
            <person name="Grimmond S.M."/>
            <person name="Teasdale R.D."/>
            <person name="Liu E.T."/>
            <person name="Brusic V."/>
            <person name="Quackenbush J."/>
            <person name="Wahlestedt C."/>
            <person name="Mattick J.S."/>
            <person name="Hume D.A."/>
            <person name="Kai C."/>
            <person name="Sasaki D."/>
            <person name="Tomaru Y."/>
            <person name="Fukuda S."/>
            <person name="Kanamori-Katayama M."/>
            <person name="Suzuki M."/>
            <person name="Aoki J."/>
            <person name="Arakawa T."/>
            <person name="Iida J."/>
            <person name="Imamura K."/>
            <person name="Itoh M."/>
            <person name="Kato T."/>
            <person name="Kawaji H."/>
            <person name="Kawagashira N."/>
            <person name="Kawashima T."/>
            <person name="Kojima M."/>
            <person name="Kondo S."/>
            <person name="Konno H."/>
            <person name="Nakano K."/>
            <person name="Ninomiya N."/>
            <person name="Nishio T."/>
            <person name="Okada M."/>
            <person name="Plessy C."/>
            <person name="Shibata K."/>
            <person name="Shiraki T."/>
            <person name="Suzuki S."/>
            <person name="Tagami M."/>
            <person name="Waki K."/>
            <person name="Watahiki A."/>
            <person name="Okamura-Oho Y."/>
            <person name="Suzuki H."/>
            <person name="Kawai J."/>
            <person name="Hayashizaki Y."/>
        </authorList>
    </citation>
    <scope>NUCLEOTIDE SEQUENCE [LARGE SCALE MRNA]</scope>
    <source>
        <strain>C57BL/6J</strain>
        <tissue>Tongue</tissue>
    </source>
</reference>
<reference key="2">
    <citation type="journal article" date="2004" name="Genome Res.">
        <title>The status, quality, and expansion of the NIH full-length cDNA project: the Mammalian Gene Collection (MGC).</title>
        <authorList>
            <consortium name="The MGC Project Team"/>
        </authorList>
    </citation>
    <scope>NUCLEOTIDE SEQUENCE [LARGE SCALE MRNA]</scope>
    <source>
        <tissue>Brain</tissue>
        <tissue>Limb</tissue>
    </source>
</reference>
<reference key="3">
    <citation type="journal article" date="2010" name="Cell">
        <title>A tissue-specific atlas of mouse protein phosphorylation and expression.</title>
        <authorList>
            <person name="Huttlin E.L."/>
            <person name="Jedrychowski M.P."/>
            <person name="Elias J.E."/>
            <person name="Goswami T."/>
            <person name="Rad R."/>
            <person name="Beausoleil S.A."/>
            <person name="Villen J."/>
            <person name="Haas W."/>
            <person name="Sowa M.E."/>
            <person name="Gygi S.P."/>
        </authorList>
    </citation>
    <scope>IDENTIFICATION BY MASS SPECTROMETRY [LARGE SCALE ANALYSIS]</scope>
    <source>
        <tissue>Brain</tissue>
        <tissue>Brown adipose tissue</tissue>
        <tissue>Heart</tissue>
        <tissue>Kidney</tissue>
        <tissue>Pancreas</tissue>
        <tissue>Spleen</tissue>
        <tissue>Testis</tissue>
    </source>
</reference>
<evidence type="ECO:0000250" key="1">
    <source>
        <dbReference type="UniProtKB" id="P82933"/>
    </source>
</evidence>
<evidence type="ECO:0000255" key="2"/>
<evidence type="ECO:0000256" key="3">
    <source>
        <dbReference type="SAM" id="MobiDB-lite"/>
    </source>
</evidence>
<evidence type="ECO:0000305" key="4"/>
<sequence>MAAPCVSCGRVLSLWFTPAVRASLCQRPGYWTASAVGWQTGTRFQLSKLIHTTVVTTKKNVQASRQESYTEDFIKKQIEEFNIGKRHLANMMGEDPETFAEEDIDRAIAYLFPSGLFEKRARPMMKHPEHIFPKQRATQWGEDGRPFHFLFYTGKQSYYSLMHDVYGKVMQLEKHRGPLSASAESRDLIGSRWLIKEELEEMLVEKLSDEDYAQFIRLLEKLLTLPCGPAEEEFVQRFRRSVTIQSKKQLIEPVQYDEQGMAFSTSEGRRKSATAQAVVYEHGSGKIHVNGVDYLIYFPITQDREQLMFPFHFLDRLERHDVTCTVSGGGRSAQAGAIRLAMARALCSFVTEDEVEWMRQAGLLTPDPRIRERKKPGQEGARRKFTWKKR</sequence>
<protein>
    <recommendedName>
        <fullName evidence="4">Small ribosomal subunit protein uS9m</fullName>
    </recommendedName>
    <alternativeName>
        <fullName>28S ribosomal protein S9, mitochondrial</fullName>
        <shortName>MRP-S9</shortName>
        <shortName>S9mt</shortName>
    </alternativeName>
</protein>
<organism>
    <name type="scientific">Mus musculus</name>
    <name type="common">Mouse</name>
    <dbReference type="NCBI Taxonomy" id="10090"/>
    <lineage>
        <taxon>Eukaryota</taxon>
        <taxon>Metazoa</taxon>
        <taxon>Chordata</taxon>
        <taxon>Craniata</taxon>
        <taxon>Vertebrata</taxon>
        <taxon>Euteleostomi</taxon>
        <taxon>Mammalia</taxon>
        <taxon>Eutheria</taxon>
        <taxon>Euarchontoglires</taxon>
        <taxon>Glires</taxon>
        <taxon>Rodentia</taxon>
        <taxon>Myomorpha</taxon>
        <taxon>Muroidea</taxon>
        <taxon>Muridae</taxon>
        <taxon>Murinae</taxon>
        <taxon>Mus</taxon>
        <taxon>Mus</taxon>
    </lineage>
</organism>
<accession>Q9D7N3</accession>
<accession>Q14AZ3</accession>
<accession>Q6IS29</accession>
<accession>Q80W17</accession>
<feature type="transit peptide" description="Mitochondrion" evidence="2">
    <location>
        <begin position="1"/>
        <end status="unknown"/>
    </location>
</feature>
<feature type="chain" id="PRO_0000030656" description="Small ribosomal subunit protein uS9m">
    <location>
        <begin status="unknown"/>
        <end position="390"/>
    </location>
</feature>
<feature type="region of interest" description="Disordered" evidence="3">
    <location>
        <begin position="368"/>
        <end position="390"/>
    </location>
</feature>
<feature type="sequence conflict" description="In Ref. 1; BAB26060." evidence="4" ref="1">
    <original>L</original>
    <variation>P</variation>
    <location>
        <position position="14"/>
    </location>
</feature>
<feature type="sequence conflict" description="In Ref. 1; BAB26060." evidence="4" ref="1">
    <original>K</original>
    <variation>T</variation>
    <location>
        <position position="206"/>
    </location>
</feature>
<proteinExistence type="evidence at protein level"/>
<name>RT09_MOUSE</name>
<gene>
    <name type="primary">Mrps9</name>
</gene>
<comment type="subunit">
    <text evidence="1">Component of the mitochondrial ribosome small subunit (28S) which comprises a 12S rRNA and about 30 distinct proteins.</text>
</comment>
<comment type="subcellular location">
    <subcellularLocation>
        <location evidence="1">Mitochondrion</location>
    </subcellularLocation>
</comment>
<comment type="similarity">
    <text evidence="4">Belongs to the universal ribosomal protein uS9 family.</text>
</comment>